<reference evidence="5" key="1">
    <citation type="journal article" date="2007" name="Nature">
        <title>Evolution of genes and genomes on the Drosophila phylogeny.</title>
        <authorList>
            <consortium name="Drosophila 12 genomes consortium"/>
        </authorList>
    </citation>
    <scope>NUCLEOTIDE SEQUENCE [LARGE SCALE GENOMIC DNA]</scope>
    <source>
        <strain evidence="5">Tucson 14021-0224.01</strain>
    </source>
</reference>
<name>INT13_DROER</name>
<protein>
    <recommendedName>
        <fullName>Protein asunder</fullName>
    </recommendedName>
    <alternativeName>
        <fullName evidence="1">Cell cycle regulator Mat89Bb</fullName>
    </alternativeName>
    <alternativeName>
        <fullName evidence="1">Maternal transcript 89Bb</fullName>
    </alternativeName>
    <alternativeName>
        <fullName>Set apart in position or space protein</fullName>
    </alternativeName>
</protein>
<proteinExistence type="inferred from homology"/>
<feature type="chain" id="PRO_0000385340" description="Protein asunder">
    <location>
        <begin position="1"/>
        <end position="689"/>
    </location>
</feature>
<feature type="region of interest" description="Disordered" evidence="3">
    <location>
        <begin position="578"/>
        <end position="619"/>
    </location>
</feature>
<feature type="coiled-coil region" evidence="2">
    <location>
        <begin position="521"/>
        <end position="550"/>
    </location>
</feature>
<feature type="short sequence motif" description="Nuclear localization signal (NLS)" evidence="1">
    <location>
        <begin position="613"/>
        <end position="619"/>
    </location>
</feature>
<feature type="compositionally biased region" description="Low complexity" evidence="3">
    <location>
        <begin position="600"/>
        <end position="614"/>
    </location>
</feature>
<sequence>MFERNQKTIFVLDHTRYFSIASEEYISMDFLKGKPSADGGATGAAGNATGGGGSQFSKSLWTCACESSIEYCRVVWDLFPGKKHVRFIVSDTAAHIVNTWSHSTQNMSHVMNAMVMVGVPSRNVATSSDYSVIHGLRAAIEALAEPTDEQLAAMADLGTDELPRIPNKGRVICITSARDNTSMKSLEDIFNTVLVQQNALAAPPAKKGLVIDHCHLVILNIVPLGVESLVTNRSLLKISPLLDVEIHTVSAPDISYKLTHLILNHYDLASTTVTNIPMKEEQNANSSANYDVEILHSRRAHSITCGPDFSLPTSIKQGATYETVTLKWCTPRGCGSADLQPCLGQFLVTPVDVTSRPSSCLINFLLNGRSVLLEMPRKTGSKATSHMLSARGGEIFVHSLCITRSCMDEAPSITDGPGGRVSDYRTAELGQLIKMSRMVPLKVKDPSAPPLARRLPRYFPLTTSSSILFHLQRHINWLPHFLHILVKEDMDKQDEVRCQQHIHELYKSASRGDVLPFTHTNGARLKLSKAKDQYRLLYRELEQLIQLNATTMHHKNLLESLQSLRAAYGDAPLKSEPGASLLRSYTESPLSPERLEPITSGSASGSSNSNSLLKASKRRMSSCGQRSLLDIISSAERSQSNKRLDFSGRLCTPLGQVAKLYPDFGNKDKDSVVTAASITPNVKEESVRS</sequence>
<dbReference type="EMBL" id="CH954181">
    <property type="protein sequence ID" value="EDV49119.1"/>
    <property type="molecule type" value="Genomic_DNA"/>
</dbReference>
<dbReference type="SMR" id="B3P100"/>
<dbReference type="EnsemblMetazoa" id="FBtr0137043">
    <property type="protein sequence ID" value="FBpp0135535"/>
    <property type="gene ID" value="FBgn0109217"/>
</dbReference>
<dbReference type="EnsemblMetazoa" id="XM_001980125.3">
    <property type="protein sequence ID" value="XP_001980161.1"/>
    <property type="gene ID" value="LOC6553317"/>
</dbReference>
<dbReference type="EnsemblMetazoa" id="XM_026975727.1">
    <property type="protein sequence ID" value="XP_026831528.1"/>
    <property type="gene ID" value="LOC6553317"/>
</dbReference>
<dbReference type="GeneID" id="6553317"/>
<dbReference type="KEGG" id="der:6553317"/>
<dbReference type="CTD" id="41971"/>
<dbReference type="eggNOG" id="KOG3711">
    <property type="taxonomic scope" value="Eukaryota"/>
</dbReference>
<dbReference type="HOGENOM" id="CLU_012654_1_0_1"/>
<dbReference type="OMA" id="NCTAMHR"/>
<dbReference type="OrthoDB" id="5844105at2759"/>
<dbReference type="PhylomeDB" id="B3P100"/>
<dbReference type="Proteomes" id="UP000008711">
    <property type="component" value="Unassembled WGS sequence"/>
</dbReference>
<dbReference type="GO" id="GO:0005737">
    <property type="term" value="C:cytoplasm"/>
    <property type="evidence" value="ECO:0000250"/>
    <property type="project" value="UniProtKB"/>
</dbReference>
<dbReference type="GO" id="GO:0160232">
    <property type="term" value="C:INTAC complex"/>
    <property type="evidence" value="ECO:0007669"/>
    <property type="project" value="EnsemblMetazoa"/>
</dbReference>
<dbReference type="GO" id="GO:0032039">
    <property type="term" value="C:integrator complex"/>
    <property type="evidence" value="ECO:0007669"/>
    <property type="project" value="EnsemblMetazoa"/>
</dbReference>
<dbReference type="GO" id="GO:0005634">
    <property type="term" value="C:nucleus"/>
    <property type="evidence" value="ECO:0000250"/>
    <property type="project" value="UniProtKB"/>
</dbReference>
<dbReference type="GO" id="GO:0048471">
    <property type="term" value="C:perinuclear region of cytoplasm"/>
    <property type="evidence" value="ECO:0007669"/>
    <property type="project" value="UniProtKB-SubCell"/>
</dbReference>
<dbReference type="GO" id="GO:0051301">
    <property type="term" value="P:cell division"/>
    <property type="evidence" value="ECO:0007669"/>
    <property type="project" value="UniProtKB-KW"/>
</dbReference>
<dbReference type="GO" id="GO:0051642">
    <property type="term" value="P:centrosome localization"/>
    <property type="evidence" value="ECO:0007669"/>
    <property type="project" value="EnsemblMetazoa"/>
</dbReference>
<dbReference type="GO" id="GO:0046843">
    <property type="term" value="P:dorsal appendage formation"/>
    <property type="evidence" value="ECO:0007669"/>
    <property type="project" value="EnsemblMetazoa"/>
</dbReference>
<dbReference type="GO" id="GO:0030317">
    <property type="term" value="P:flagellated sperm motility"/>
    <property type="evidence" value="ECO:0000250"/>
    <property type="project" value="UniProtKB"/>
</dbReference>
<dbReference type="GO" id="GO:0051321">
    <property type="term" value="P:meiotic cell cycle"/>
    <property type="evidence" value="ECO:0007669"/>
    <property type="project" value="UniProtKB-KW"/>
</dbReference>
<dbReference type="GO" id="GO:0051663">
    <property type="term" value="P:oocyte nucleus localization involved in oocyte dorsal/ventral axis specification"/>
    <property type="evidence" value="ECO:0007669"/>
    <property type="project" value="EnsemblMetazoa"/>
</dbReference>
<dbReference type="GO" id="GO:0060814">
    <property type="term" value="P:posterior mRNA localization involved in anterior/posterior axis specification"/>
    <property type="evidence" value="ECO:0007669"/>
    <property type="project" value="EnsemblMetazoa"/>
</dbReference>
<dbReference type="GO" id="GO:0080154">
    <property type="term" value="P:regulation of fertilization"/>
    <property type="evidence" value="ECO:0000250"/>
    <property type="project" value="UniProtKB"/>
</dbReference>
<dbReference type="GO" id="GO:0007346">
    <property type="term" value="P:regulation of mitotic cell cycle"/>
    <property type="evidence" value="ECO:0000250"/>
    <property type="project" value="UniProtKB"/>
</dbReference>
<dbReference type="GO" id="GO:0160240">
    <property type="term" value="P:RNA polymerase II transcription initiation surveillance"/>
    <property type="evidence" value="ECO:0007669"/>
    <property type="project" value="EnsemblMetazoa"/>
</dbReference>
<dbReference type="GO" id="GO:0034472">
    <property type="term" value="P:snRNA 3'-end processing"/>
    <property type="evidence" value="ECO:0007669"/>
    <property type="project" value="EnsemblMetazoa"/>
</dbReference>
<dbReference type="GO" id="GO:0007283">
    <property type="term" value="P:spermatogenesis"/>
    <property type="evidence" value="ECO:0007669"/>
    <property type="project" value="UniProtKB-KW"/>
</dbReference>
<dbReference type="InterPro" id="IPR019355">
    <property type="entry name" value="Cell_cycle_regulator_Mat89Bb"/>
</dbReference>
<dbReference type="PANTHER" id="PTHR12955:SF1">
    <property type="entry name" value="INTEGRATOR COMPLEX SUBUNIT 13"/>
    <property type="match status" value="1"/>
</dbReference>
<dbReference type="PANTHER" id="PTHR12955">
    <property type="entry name" value="SARCOMA ANTIGEN NY-SAR-95-RELATED"/>
    <property type="match status" value="1"/>
</dbReference>
<dbReference type="Pfam" id="PF10221">
    <property type="entry name" value="Mat89Bb"/>
    <property type="match status" value="1"/>
</dbReference>
<accession>B3P100</accession>
<organism>
    <name type="scientific">Drosophila erecta</name>
    <name type="common">Fruit fly</name>
    <dbReference type="NCBI Taxonomy" id="7220"/>
    <lineage>
        <taxon>Eukaryota</taxon>
        <taxon>Metazoa</taxon>
        <taxon>Ecdysozoa</taxon>
        <taxon>Arthropoda</taxon>
        <taxon>Hexapoda</taxon>
        <taxon>Insecta</taxon>
        <taxon>Pterygota</taxon>
        <taxon>Neoptera</taxon>
        <taxon>Endopterygota</taxon>
        <taxon>Diptera</taxon>
        <taxon>Brachycera</taxon>
        <taxon>Muscomorpha</taxon>
        <taxon>Ephydroidea</taxon>
        <taxon>Drosophilidae</taxon>
        <taxon>Drosophila</taxon>
        <taxon>Sophophora</taxon>
    </lineage>
</organism>
<evidence type="ECO:0000250" key="1">
    <source>
        <dbReference type="UniProtKB" id="Q9VEX5"/>
    </source>
</evidence>
<evidence type="ECO:0000255" key="2"/>
<evidence type="ECO:0000256" key="3">
    <source>
        <dbReference type="SAM" id="MobiDB-lite"/>
    </source>
</evidence>
<evidence type="ECO:0000305" key="4"/>
<evidence type="ECO:0000312" key="5">
    <source>
        <dbReference type="EMBL" id="EDV49119.1"/>
    </source>
</evidence>
<comment type="function">
    <text evidence="1">Component of the integrator complex, a multiprotein complex that terminates RNA polymerase II (Pol II) transcription in the promoter-proximal region of genes. The integrator complex provides a quality checkpoint during transcription elongation by driving premature transcription termination of transcripts that are unfavorably configured for transcriptional elongation: the complex terminates transcription by (1) catalyzing dephosphorylation of the C-terminal domain (CTD) of Pol II subunit Polr2A/Rbp1 and Spt5, and (2) degrading the exiting nascent RNA transcript via endonuclease activity. The integrator complex is also involved in the 3'-end processing of the U7 snRNA, and also the spliceosomal snRNAs U1, U2, U4 and U5.</text>
</comment>
<comment type="subunit">
    <text evidence="1">Belongs to the multiprotein complex Integrator, at least composed of IntS1, IntS2, IntS3, IntS4, omd/IntS5, IntS6, defl/IntS7, IntS8, IntS9, IntS10, IntS11, IntS12, asun/IntS13, IntS14 and IntS15. The core complex associates with protein phosphatase 2A subunits mts/PP2A and Pp2A-29B, to form the Integrator-PP2A (INTAC) complex.</text>
</comment>
<comment type="subcellular location">
    <subcellularLocation>
        <location evidence="1">Nucleus</location>
    </subcellularLocation>
    <subcellularLocation>
        <location evidence="1">Cytoplasm</location>
    </subcellularLocation>
    <subcellularLocation>
        <location evidence="1">Cytoplasm</location>
        <location evidence="1">Perinuclear region</location>
    </subcellularLocation>
    <text evidence="1">Colocalizes with dynein-dynactin on the nuclear surface at the meiotic G2/prophase transition in primary spermatocytes. Nuclear location is required for recruitment of dynein motors to nuclear envelope at G2/M.</text>
</comment>
<comment type="PTM">
    <text evidence="1">Phosphorylated.</text>
</comment>
<comment type="similarity">
    <text evidence="4">Belongs to the Integrator subunit 13 family.</text>
</comment>
<keyword id="KW-0131">Cell cycle</keyword>
<keyword id="KW-0132">Cell division</keyword>
<keyword id="KW-0175">Coiled coil</keyword>
<keyword id="KW-0963">Cytoplasm</keyword>
<keyword id="KW-0217">Developmental protein</keyword>
<keyword id="KW-0221">Differentiation</keyword>
<keyword id="KW-0469">Meiosis</keyword>
<keyword id="KW-0498">Mitosis</keyword>
<keyword id="KW-0539">Nucleus</keyword>
<keyword id="KW-0597">Phosphoprotein</keyword>
<keyword id="KW-0744">Spermatogenesis</keyword>
<gene>
    <name type="primary">asun</name>
    <name type="synonym">Mat89Bb</name>
    <name type="ORF">GG16989</name>
</gene>